<name>PANC_CLOD6</name>
<dbReference type="EC" id="6.3.2.1" evidence="1"/>
<dbReference type="EMBL" id="AM180355">
    <property type="protein sequence ID" value="CAJ68377.1"/>
    <property type="molecule type" value="Genomic_DNA"/>
</dbReference>
<dbReference type="RefSeq" id="WP_009902543.1">
    <property type="nucleotide sequence ID" value="NZ_JAUPES010000019.1"/>
</dbReference>
<dbReference type="RefSeq" id="YP_001088013.1">
    <property type="nucleotide sequence ID" value="NC_009089.1"/>
</dbReference>
<dbReference type="SMR" id="Q18C33"/>
<dbReference type="STRING" id="272563.CD630_15120"/>
<dbReference type="EnsemblBacteria" id="CAJ68377">
    <property type="protein sequence ID" value="CAJ68377"/>
    <property type="gene ID" value="CD630_15120"/>
</dbReference>
<dbReference type="KEGG" id="cdf:CD630_15120"/>
<dbReference type="KEGG" id="pdc:CDIF630_01678"/>
<dbReference type="PATRIC" id="fig|272563.120.peg.1583"/>
<dbReference type="eggNOG" id="COG0414">
    <property type="taxonomic scope" value="Bacteria"/>
</dbReference>
<dbReference type="OrthoDB" id="9773087at2"/>
<dbReference type="PhylomeDB" id="Q18C33"/>
<dbReference type="BioCyc" id="PDIF272563:G12WB-1649-MONOMER"/>
<dbReference type="UniPathway" id="UPA00028">
    <property type="reaction ID" value="UER00005"/>
</dbReference>
<dbReference type="Proteomes" id="UP000001978">
    <property type="component" value="Chromosome"/>
</dbReference>
<dbReference type="GO" id="GO:0005829">
    <property type="term" value="C:cytosol"/>
    <property type="evidence" value="ECO:0007669"/>
    <property type="project" value="TreeGrafter"/>
</dbReference>
<dbReference type="GO" id="GO:0005524">
    <property type="term" value="F:ATP binding"/>
    <property type="evidence" value="ECO:0007669"/>
    <property type="project" value="UniProtKB-KW"/>
</dbReference>
<dbReference type="GO" id="GO:0004592">
    <property type="term" value="F:pantoate-beta-alanine ligase activity"/>
    <property type="evidence" value="ECO:0007669"/>
    <property type="project" value="UniProtKB-UniRule"/>
</dbReference>
<dbReference type="GO" id="GO:0015940">
    <property type="term" value="P:pantothenate biosynthetic process"/>
    <property type="evidence" value="ECO:0007669"/>
    <property type="project" value="UniProtKB-UniRule"/>
</dbReference>
<dbReference type="CDD" id="cd00560">
    <property type="entry name" value="PanC"/>
    <property type="match status" value="1"/>
</dbReference>
<dbReference type="FunFam" id="3.30.1300.10:FF:000001">
    <property type="entry name" value="Pantothenate synthetase"/>
    <property type="match status" value="1"/>
</dbReference>
<dbReference type="FunFam" id="3.40.50.620:FF:000013">
    <property type="entry name" value="Pantothenate synthetase"/>
    <property type="match status" value="1"/>
</dbReference>
<dbReference type="Gene3D" id="3.40.50.620">
    <property type="entry name" value="HUPs"/>
    <property type="match status" value="1"/>
</dbReference>
<dbReference type="Gene3D" id="3.30.1300.10">
    <property type="entry name" value="Pantoate-beta-alanine ligase, C-terminal domain"/>
    <property type="match status" value="1"/>
</dbReference>
<dbReference type="HAMAP" id="MF_00158">
    <property type="entry name" value="PanC"/>
    <property type="match status" value="1"/>
</dbReference>
<dbReference type="InterPro" id="IPR004821">
    <property type="entry name" value="Cyt_trans-like"/>
</dbReference>
<dbReference type="InterPro" id="IPR003721">
    <property type="entry name" value="Pantoate_ligase"/>
</dbReference>
<dbReference type="InterPro" id="IPR042176">
    <property type="entry name" value="Pantoate_ligase_C"/>
</dbReference>
<dbReference type="InterPro" id="IPR014729">
    <property type="entry name" value="Rossmann-like_a/b/a_fold"/>
</dbReference>
<dbReference type="NCBIfam" id="TIGR00125">
    <property type="entry name" value="cyt_tran_rel"/>
    <property type="match status" value="1"/>
</dbReference>
<dbReference type="NCBIfam" id="TIGR00018">
    <property type="entry name" value="panC"/>
    <property type="match status" value="1"/>
</dbReference>
<dbReference type="PANTHER" id="PTHR21299">
    <property type="entry name" value="CYTIDYLATE KINASE/PANTOATE-BETA-ALANINE LIGASE"/>
    <property type="match status" value="1"/>
</dbReference>
<dbReference type="PANTHER" id="PTHR21299:SF1">
    <property type="entry name" value="PANTOATE--BETA-ALANINE LIGASE"/>
    <property type="match status" value="1"/>
</dbReference>
<dbReference type="Pfam" id="PF02569">
    <property type="entry name" value="Pantoate_ligase"/>
    <property type="match status" value="1"/>
</dbReference>
<dbReference type="SUPFAM" id="SSF52374">
    <property type="entry name" value="Nucleotidylyl transferase"/>
    <property type="match status" value="1"/>
</dbReference>
<protein>
    <recommendedName>
        <fullName evidence="1">Pantothenate synthetase</fullName>
        <shortName evidence="1">PS</shortName>
        <ecNumber evidence="1">6.3.2.1</ecNumber>
    </recommendedName>
    <alternativeName>
        <fullName evidence="1">Pantoate--beta-alanine ligase</fullName>
    </alternativeName>
    <alternativeName>
        <fullName evidence="1">Pantoate-activating enzyme</fullName>
    </alternativeName>
</protein>
<gene>
    <name evidence="1" type="primary">panC</name>
    <name type="ordered locus">CD630_15120</name>
</gene>
<organism>
    <name type="scientific">Clostridioides difficile (strain 630)</name>
    <name type="common">Peptoclostridium difficile</name>
    <dbReference type="NCBI Taxonomy" id="272563"/>
    <lineage>
        <taxon>Bacteria</taxon>
        <taxon>Bacillati</taxon>
        <taxon>Bacillota</taxon>
        <taxon>Clostridia</taxon>
        <taxon>Peptostreptococcales</taxon>
        <taxon>Peptostreptococcaceae</taxon>
        <taxon>Clostridioides</taxon>
    </lineage>
</organism>
<accession>Q18C33</accession>
<keyword id="KW-0067">ATP-binding</keyword>
<keyword id="KW-0963">Cytoplasm</keyword>
<keyword id="KW-0436">Ligase</keyword>
<keyword id="KW-0547">Nucleotide-binding</keyword>
<keyword id="KW-0566">Pantothenate biosynthesis</keyword>
<keyword id="KW-1185">Reference proteome</keyword>
<evidence type="ECO:0000255" key="1">
    <source>
        <dbReference type="HAMAP-Rule" id="MF_00158"/>
    </source>
</evidence>
<comment type="function">
    <text evidence="1">Catalyzes the condensation of pantoate with beta-alanine in an ATP-dependent reaction via a pantoyl-adenylate intermediate.</text>
</comment>
<comment type="catalytic activity">
    <reaction evidence="1">
        <text>(R)-pantoate + beta-alanine + ATP = (R)-pantothenate + AMP + diphosphate + H(+)</text>
        <dbReference type="Rhea" id="RHEA:10912"/>
        <dbReference type="ChEBI" id="CHEBI:15378"/>
        <dbReference type="ChEBI" id="CHEBI:15980"/>
        <dbReference type="ChEBI" id="CHEBI:29032"/>
        <dbReference type="ChEBI" id="CHEBI:30616"/>
        <dbReference type="ChEBI" id="CHEBI:33019"/>
        <dbReference type="ChEBI" id="CHEBI:57966"/>
        <dbReference type="ChEBI" id="CHEBI:456215"/>
        <dbReference type="EC" id="6.3.2.1"/>
    </reaction>
</comment>
<comment type="pathway">
    <text evidence="1">Cofactor biosynthesis; (R)-pantothenate biosynthesis; (R)-pantothenate from (R)-pantoate and beta-alanine: step 1/1.</text>
</comment>
<comment type="subunit">
    <text evidence="1">Homodimer.</text>
</comment>
<comment type="subcellular location">
    <subcellularLocation>
        <location evidence="1">Cytoplasm</location>
    </subcellularLocation>
</comment>
<comment type="miscellaneous">
    <text evidence="1">The reaction proceeds by a bi uni uni bi ping pong mechanism.</text>
</comment>
<comment type="similarity">
    <text evidence="1">Belongs to the pantothenate synthetase family.</text>
</comment>
<proteinExistence type="inferred from homology"/>
<sequence length="282" mass="31691">MLVKEIKLLRNIIKDWRKHGYSIGLVTTMGFLHEGHQSLIKKAVKENDKVVVSVFVNPTQFGPNEDFNSYPRDIDKDFKYCMDSGATVVFNPSPEEMYLKGNCTTINVSGLTDFLCGAKRPVHFGGVCLVVSKFLNIVTPDKAYFGEKDAQQLAVIKRMVKDLNIDTEIIGCPIIRENDGLAKSSRNTYLSEEERKSALILNKSLSLAKEELVKGNLNPENIKELITAKINSEHLAKIDYVEIVDSETLQPVKQIEHSILVAIAVFIGKTRLIDNFTFELNI</sequence>
<reference key="1">
    <citation type="journal article" date="2006" name="Nat. Genet.">
        <title>The multidrug-resistant human pathogen Clostridium difficile has a highly mobile, mosaic genome.</title>
        <authorList>
            <person name="Sebaihia M."/>
            <person name="Wren B.W."/>
            <person name="Mullany P."/>
            <person name="Fairweather N.F."/>
            <person name="Minton N."/>
            <person name="Stabler R."/>
            <person name="Thomson N.R."/>
            <person name="Roberts A.P."/>
            <person name="Cerdeno-Tarraga A.M."/>
            <person name="Wang H."/>
            <person name="Holden M.T.G."/>
            <person name="Wright A."/>
            <person name="Churcher C."/>
            <person name="Quail M.A."/>
            <person name="Baker S."/>
            <person name="Bason N."/>
            <person name="Brooks K."/>
            <person name="Chillingworth T."/>
            <person name="Cronin A."/>
            <person name="Davis P."/>
            <person name="Dowd L."/>
            <person name="Fraser A."/>
            <person name="Feltwell T."/>
            <person name="Hance Z."/>
            <person name="Holroyd S."/>
            <person name="Jagels K."/>
            <person name="Moule S."/>
            <person name="Mungall K."/>
            <person name="Price C."/>
            <person name="Rabbinowitsch E."/>
            <person name="Sharp S."/>
            <person name="Simmonds M."/>
            <person name="Stevens K."/>
            <person name="Unwin L."/>
            <person name="Whithead S."/>
            <person name="Dupuy B."/>
            <person name="Dougan G."/>
            <person name="Barrell B."/>
            <person name="Parkhill J."/>
        </authorList>
    </citation>
    <scope>NUCLEOTIDE SEQUENCE [LARGE SCALE GENOMIC DNA]</scope>
    <source>
        <strain>630</strain>
    </source>
</reference>
<feature type="chain" id="PRO_0000305426" description="Pantothenate synthetase">
    <location>
        <begin position="1"/>
        <end position="282"/>
    </location>
</feature>
<feature type="active site" description="Proton donor" evidence="1">
    <location>
        <position position="36"/>
    </location>
</feature>
<feature type="binding site" evidence="1">
    <location>
        <begin position="29"/>
        <end position="36"/>
    </location>
    <ligand>
        <name>ATP</name>
        <dbReference type="ChEBI" id="CHEBI:30616"/>
    </ligand>
</feature>
<feature type="binding site" evidence="1">
    <location>
        <position position="60"/>
    </location>
    <ligand>
        <name>(R)-pantoate</name>
        <dbReference type="ChEBI" id="CHEBI:15980"/>
    </ligand>
</feature>
<feature type="binding site" evidence="1">
    <location>
        <position position="60"/>
    </location>
    <ligand>
        <name>beta-alanine</name>
        <dbReference type="ChEBI" id="CHEBI:57966"/>
    </ligand>
</feature>
<feature type="binding site" evidence="1">
    <location>
        <begin position="146"/>
        <end position="149"/>
    </location>
    <ligand>
        <name>ATP</name>
        <dbReference type="ChEBI" id="CHEBI:30616"/>
    </ligand>
</feature>
<feature type="binding site" evidence="1">
    <location>
        <position position="152"/>
    </location>
    <ligand>
        <name>(R)-pantoate</name>
        <dbReference type="ChEBI" id="CHEBI:15980"/>
    </ligand>
</feature>
<feature type="binding site" evidence="1">
    <location>
        <position position="175"/>
    </location>
    <ligand>
        <name>ATP</name>
        <dbReference type="ChEBI" id="CHEBI:30616"/>
    </ligand>
</feature>
<feature type="binding site" evidence="1">
    <location>
        <begin position="183"/>
        <end position="186"/>
    </location>
    <ligand>
        <name>ATP</name>
        <dbReference type="ChEBI" id="CHEBI:30616"/>
    </ligand>
</feature>